<comment type="subcellular location">
    <subcellularLocation>
        <location evidence="3">Membrane</location>
        <topology evidence="3">Single-pass type I membrane protein</topology>
    </subcellularLocation>
</comment>
<comment type="similarity">
    <text evidence="3">Belongs to the uroplakin-3 family.</text>
</comment>
<comment type="sequence caution" evidence="3">
    <conflict type="erroneous initiation">
        <sequence resource="EMBL-CDS" id="AAH99515"/>
    </conflict>
    <text>Extended N-terminus.</text>
</comment>
<comment type="sequence caution" evidence="3">
    <conflict type="erroneous initiation">
        <sequence resource="EMBL-CDS" id="AAI15564"/>
    </conflict>
    <text>Extended N-terminus.</text>
</comment>
<feature type="signal peptide" evidence="2">
    <location>
        <begin position="1"/>
        <end position="26"/>
    </location>
</feature>
<feature type="chain" id="PRO_0000375088" description="Uroplakin-3b-like protein 1">
    <location>
        <begin position="27"/>
        <end position="249"/>
    </location>
</feature>
<feature type="topological domain" description="Extracellular" evidence="2">
    <location>
        <begin position="27"/>
        <end position="194"/>
    </location>
</feature>
<feature type="transmembrane region" description="Helical" evidence="2">
    <location>
        <begin position="195"/>
        <end position="215"/>
    </location>
</feature>
<feature type="topological domain" description="Cytoplasmic" evidence="2">
    <location>
        <begin position="216"/>
        <end position="249"/>
    </location>
</feature>
<feature type="glycosylation site" description="N-linked (GlcNAc...) asparagine" evidence="2">
    <location>
        <position position="63"/>
    </location>
</feature>
<feature type="glycosylation site" description="N-linked (GlcNAc...) asparagine" evidence="2">
    <location>
        <position position="82"/>
    </location>
</feature>
<feature type="glycosylation site" description="N-linked (GlcNAc...) asparagine" evidence="2">
    <location>
        <position position="133"/>
    </location>
</feature>
<feature type="sequence conflict" description="In Ref. 2; AAI15564." evidence="3" ref="2">
    <original>C</original>
    <variation>CS</variation>
    <location>
        <position position="218"/>
    </location>
</feature>
<dbReference type="EMBL" id="AK009780">
    <property type="protein sequence ID" value="BAB26500.1"/>
    <property type="molecule type" value="mRNA"/>
</dbReference>
<dbReference type="EMBL" id="BC099515">
    <property type="protein sequence ID" value="AAH99515.1"/>
    <property type="status" value="ALT_INIT"/>
    <property type="molecule type" value="mRNA"/>
</dbReference>
<dbReference type="EMBL" id="BC115563">
    <property type="protein sequence ID" value="AAI15564.1"/>
    <property type="status" value="ALT_INIT"/>
    <property type="molecule type" value="mRNA"/>
</dbReference>
<dbReference type="EMBL" id="BC115564">
    <property type="protein sequence ID" value="AAI15565.1"/>
    <property type="molecule type" value="mRNA"/>
</dbReference>
<dbReference type="RefSeq" id="NP_081434.1">
    <property type="nucleotide sequence ID" value="NM_027158.1"/>
</dbReference>
<dbReference type="RefSeq" id="XP_006504557.2">
    <property type="nucleotide sequence ID" value="XM_006504494.3"/>
</dbReference>
<dbReference type="SMR" id="Q9D701"/>
<dbReference type="FunCoup" id="Q9D701">
    <property type="interactions" value="10"/>
</dbReference>
<dbReference type="STRING" id="10090.ENSMUSP00000006303"/>
<dbReference type="GlyCosmos" id="Q9D701">
    <property type="glycosylation" value="3 sites, No reported glycans"/>
</dbReference>
<dbReference type="GlyGen" id="Q9D701">
    <property type="glycosylation" value="3 sites"/>
</dbReference>
<dbReference type="iPTMnet" id="Q9D701"/>
<dbReference type="PhosphoSitePlus" id="Q9D701"/>
<dbReference type="PaxDb" id="10090-ENSMUSP00000106767"/>
<dbReference type="GeneID" id="69665"/>
<dbReference type="KEGG" id="mmu:69665"/>
<dbReference type="UCSC" id="uc008zzs.1">
    <property type="organism name" value="mouse"/>
</dbReference>
<dbReference type="AGR" id="MGI:1916915"/>
<dbReference type="CTD" id="69665"/>
<dbReference type="MGI" id="MGI:1916915">
    <property type="gene designation" value="Upk3bl"/>
</dbReference>
<dbReference type="eggNOG" id="ENOG502S22J">
    <property type="taxonomic scope" value="Eukaryota"/>
</dbReference>
<dbReference type="InParanoid" id="Q9D701"/>
<dbReference type="OrthoDB" id="9939598at2759"/>
<dbReference type="PhylomeDB" id="Q9D701"/>
<dbReference type="BioGRID-ORCS" id="69665">
    <property type="hits" value="3 hits in 78 CRISPR screens"/>
</dbReference>
<dbReference type="PRO" id="PR:Q9D701"/>
<dbReference type="Proteomes" id="UP000000589">
    <property type="component" value="Unplaced"/>
</dbReference>
<dbReference type="RNAct" id="Q9D701">
    <property type="molecule type" value="protein"/>
</dbReference>
<dbReference type="GO" id="GO:0016020">
    <property type="term" value="C:membrane"/>
    <property type="evidence" value="ECO:0007669"/>
    <property type="project" value="UniProtKB-SubCell"/>
</dbReference>
<dbReference type="GO" id="GO:0020037">
    <property type="term" value="F:heme binding"/>
    <property type="evidence" value="ECO:0007669"/>
    <property type="project" value="InterPro"/>
</dbReference>
<dbReference type="GO" id="GO:0004601">
    <property type="term" value="F:peroxidase activity"/>
    <property type="evidence" value="ECO:0007669"/>
    <property type="project" value="InterPro"/>
</dbReference>
<dbReference type="GO" id="GO:0006979">
    <property type="term" value="P:response to oxidative stress"/>
    <property type="evidence" value="ECO:0007669"/>
    <property type="project" value="InterPro"/>
</dbReference>
<dbReference type="InterPro" id="IPR010255">
    <property type="entry name" value="Haem_peroxidase_sf"/>
</dbReference>
<dbReference type="InterPro" id="IPR024831">
    <property type="entry name" value="Uroplakin-3"/>
</dbReference>
<dbReference type="PANTHER" id="PTHR15446">
    <property type="entry name" value="UROPLAKIN III"/>
    <property type="match status" value="1"/>
</dbReference>
<dbReference type="PANTHER" id="PTHR15446:SF2">
    <property type="entry name" value="UROPLAKIN-3B-LIKE PROTEIN 1-RELATED"/>
    <property type="match status" value="1"/>
</dbReference>
<dbReference type="SUPFAM" id="SSF48113">
    <property type="entry name" value="Heme-dependent peroxidases"/>
    <property type="match status" value="1"/>
</dbReference>
<gene>
    <name evidence="1" type="primary">Upk3bl1</name>
    <name evidence="4" type="synonym">Upk3bl</name>
</gene>
<keyword id="KW-0325">Glycoprotein</keyword>
<keyword id="KW-0472">Membrane</keyword>
<keyword id="KW-1185">Reference proteome</keyword>
<keyword id="KW-0732">Signal</keyword>
<keyword id="KW-0812">Transmembrane</keyword>
<keyword id="KW-1133">Transmembrane helix</keyword>
<sequence length="249" mass="27250">MGPHGKQSVLRMPLLLLLTCVQSGTGLESINYAPQLLGATLEGRLTQSTFTLEQPLGQFKNVNLSDPDPIWLVVAHSNAAQNFTAPRKVEDRHAPANFDRNGYYLTLRANRVHYKGGQPDSQLRVLRVGNDNNCSLESQGCNSPLPGAGPYRVKFLAMSAEGPVAETLWSEEIYLQQAQTFREAPGSQGKGTVVIIAFLSILLAILLVVFLVLVISACLSTSGSSPEEQVRMRHYHTHHMGSLRAERSS</sequence>
<evidence type="ECO:0000250" key="1">
    <source>
        <dbReference type="UniProtKB" id="B0FP48"/>
    </source>
</evidence>
<evidence type="ECO:0000255" key="2"/>
<evidence type="ECO:0000305" key="3"/>
<evidence type="ECO:0000312" key="4">
    <source>
        <dbReference type="MGI" id="MGI:1916915"/>
    </source>
</evidence>
<name>UPK3L_MOUSE</name>
<accession>Q9D701</accession>
<accession>A0AUM6</accession>
<accession>Q4KL12</accession>
<protein>
    <recommendedName>
        <fullName evidence="1">Uroplakin-3b-like protein 1</fullName>
    </recommendedName>
</protein>
<proteinExistence type="evidence at transcript level"/>
<reference key="1">
    <citation type="journal article" date="2005" name="Science">
        <title>The transcriptional landscape of the mammalian genome.</title>
        <authorList>
            <person name="Carninci P."/>
            <person name="Kasukawa T."/>
            <person name="Katayama S."/>
            <person name="Gough J."/>
            <person name="Frith M.C."/>
            <person name="Maeda N."/>
            <person name="Oyama R."/>
            <person name="Ravasi T."/>
            <person name="Lenhard B."/>
            <person name="Wells C."/>
            <person name="Kodzius R."/>
            <person name="Shimokawa K."/>
            <person name="Bajic V.B."/>
            <person name="Brenner S.E."/>
            <person name="Batalov S."/>
            <person name="Forrest A.R."/>
            <person name="Zavolan M."/>
            <person name="Davis M.J."/>
            <person name="Wilming L.G."/>
            <person name="Aidinis V."/>
            <person name="Allen J.E."/>
            <person name="Ambesi-Impiombato A."/>
            <person name="Apweiler R."/>
            <person name="Aturaliya R.N."/>
            <person name="Bailey T.L."/>
            <person name="Bansal M."/>
            <person name="Baxter L."/>
            <person name="Beisel K.W."/>
            <person name="Bersano T."/>
            <person name="Bono H."/>
            <person name="Chalk A.M."/>
            <person name="Chiu K.P."/>
            <person name="Choudhary V."/>
            <person name="Christoffels A."/>
            <person name="Clutterbuck D.R."/>
            <person name="Crowe M.L."/>
            <person name="Dalla E."/>
            <person name="Dalrymple B.P."/>
            <person name="de Bono B."/>
            <person name="Della Gatta G."/>
            <person name="di Bernardo D."/>
            <person name="Down T."/>
            <person name="Engstrom P."/>
            <person name="Fagiolini M."/>
            <person name="Faulkner G."/>
            <person name="Fletcher C.F."/>
            <person name="Fukushima T."/>
            <person name="Furuno M."/>
            <person name="Futaki S."/>
            <person name="Gariboldi M."/>
            <person name="Georgii-Hemming P."/>
            <person name="Gingeras T.R."/>
            <person name="Gojobori T."/>
            <person name="Green R.E."/>
            <person name="Gustincich S."/>
            <person name="Harbers M."/>
            <person name="Hayashi Y."/>
            <person name="Hensch T.K."/>
            <person name="Hirokawa N."/>
            <person name="Hill D."/>
            <person name="Huminiecki L."/>
            <person name="Iacono M."/>
            <person name="Ikeo K."/>
            <person name="Iwama A."/>
            <person name="Ishikawa T."/>
            <person name="Jakt M."/>
            <person name="Kanapin A."/>
            <person name="Katoh M."/>
            <person name="Kawasawa Y."/>
            <person name="Kelso J."/>
            <person name="Kitamura H."/>
            <person name="Kitano H."/>
            <person name="Kollias G."/>
            <person name="Krishnan S.P."/>
            <person name="Kruger A."/>
            <person name="Kummerfeld S.K."/>
            <person name="Kurochkin I.V."/>
            <person name="Lareau L.F."/>
            <person name="Lazarevic D."/>
            <person name="Lipovich L."/>
            <person name="Liu J."/>
            <person name="Liuni S."/>
            <person name="McWilliam S."/>
            <person name="Madan Babu M."/>
            <person name="Madera M."/>
            <person name="Marchionni L."/>
            <person name="Matsuda H."/>
            <person name="Matsuzawa S."/>
            <person name="Miki H."/>
            <person name="Mignone F."/>
            <person name="Miyake S."/>
            <person name="Morris K."/>
            <person name="Mottagui-Tabar S."/>
            <person name="Mulder N."/>
            <person name="Nakano N."/>
            <person name="Nakauchi H."/>
            <person name="Ng P."/>
            <person name="Nilsson R."/>
            <person name="Nishiguchi S."/>
            <person name="Nishikawa S."/>
            <person name="Nori F."/>
            <person name="Ohara O."/>
            <person name="Okazaki Y."/>
            <person name="Orlando V."/>
            <person name="Pang K.C."/>
            <person name="Pavan W.J."/>
            <person name="Pavesi G."/>
            <person name="Pesole G."/>
            <person name="Petrovsky N."/>
            <person name="Piazza S."/>
            <person name="Reed J."/>
            <person name="Reid J.F."/>
            <person name="Ring B.Z."/>
            <person name="Ringwald M."/>
            <person name="Rost B."/>
            <person name="Ruan Y."/>
            <person name="Salzberg S.L."/>
            <person name="Sandelin A."/>
            <person name="Schneider C."/>
            <person name="Schoenbach C."/>
            <person name="Sekiguchi K."/>
            <person name="Semple C.A."/>
            <person name="Seno S."/>
            <person name="Sessa L."/>
            <person name="Sheng Y."/>
            <person name="Shibata Y."/>
            <person name="Shimada H."/>
            <person name="Shimada K."/>
            <person name="Silva D."/>
            <person name="Sinclair B."/>
            <person name="Sperling S."/>
            <person name="Stupka E."/>
            <person name="Sugiura K."/>
            <person name="Sultana R."/>
            <person name="Takenaka Y."/>
            <person name="Taki K."/>
            <person name="Tammoja K."/>
            <person name="Tan S.L."/>
            <person name="Tang S."/>
            <person name="Taylor M.S."/>
            <person name="Tegner J."/>
            <person name="Teichmann S.A."/>
            <person name="Ueda H.R."/>
            <person name="van Nimwegen E."/>
            <person name="Verardo R."/>
            <person name="Wei C.L."/>
            <person name="Yagi K."/>
            <person name="Yamanishi H."/>
            <person name="Zabarovsky E."/>
            <person name="Zhu S."/>
            <person name="Zimmer A."/>
            <person name="Hide W."/>
            <person name="Bult C."/>
            <person name="Grimmond S.M."/>
            <person name="Teasdale R.D."/>
            <person name="Liu E.T."/>
            <person name="Brusic V."/>
            <person name="Quackenbush J."/>
            <person name="Wahlestedt C."/>
            <person name="Mattick J.S."/>
            <person name="Hume D.A."/>
            <person name="Kai C."/>
            <person name="Sasaki D."/>
            <person name="Tomaru Y."/>
            <person name="Fukuda S."/>
            <person name="Kanamori-Katayama M."/>
            <person name="Suzuki M."/>
            <person name="Aoki J."/>
            <person name="Arakawa T."/>
            <person name="Iida J."/>
            <person name="Imamura K."/>
            <person name="Itoh M."/>
            <person name="Kato T."/>
            <person name="Kawaji H."/>
            <person name="Kawagashira N."/>
            <person name="Kawashima T."/>
            <person name="Kojima M."/>
            <person name="Kondo S."/>
            <person name="Konno H."/>
            <person name="Nakano K."/>
            <person name="Ninomiya N."/>
            <person name="Nishio T."/>
            <person name="Okada M."/>
            <person name="Plessy C."/>
            <person name="Shibata K."/>
            <person name="Shiraki T."/>
            <person name="Suzuki S."/>
            <person name="Tagami M."/>
            <person name="Waki K."/>
            <person name="Watahiki A."/>
            <person name="Okamura-Oho Y."/>
            <person name="Suzuki H."/>
            <person name="Kawai J."/>
            <person name="Hayashizaki Y."/>
        </authorList>
    </citation>
    <scope>NUCLEOTIDE SEQUENCE [LARGE SCALE MRNA]</scope>
    <source>
        <strain>C57BL/6J</strain>
        <tissue>Tongue</tissue>
    </source>
</reference>
<reference key="2">
    <citation type="journal article" date="2004" name="Genome Res.">
        <title>The status, quality, and expansion of the NIH full-length cDNA project: the Mammalian Gene Collection (MGC).</title>
        <authorList>
            <consortium name="The MGC Project Team"/>
        </authorList>
    </citation>
    <scope>NUCLEOTIDE SEQUENCE [LARGE SCALE MRNA]</scope>
    <source>
        <tissue>Thyroid</tissue>
    </source>
</reference>
<organism>
    <name type="scientific">Mus musculus</name>
    <name type="common">Mouse</name>
    <dbReference type="NCBI Taxonomy" id="10090"/>
    <lineage>
        <taxon>Eukaryota</taxon>
        <taxon>Metazoa</taxon>
        <taxon>Chordata</taxon>
        <taxon>Craniata</taxon>
        <taxon>Vertebrata</taxon>
        <taxon>Euteleostomi</taxon>
        <taxon>Mammalia</taxon>
        <taxon>Eutheria</taxon>
        <taxon>Euarchontoglires</taxon>
        <taxon>Glires</taxon>
        <taxon>Rodentia</taxon>
        <taxon>Myomorpha</taxon>
        <taxon>Muroidea</taxon>
        <taxon>Muridae</taxon>
        <taxon>Murinae</taxon>
        <taxon>Mus</taxon>
        <taxon>Mus</taxon>
    </lineage>
</organism>